<evidence type="ECO:0000255" key="1">
    <source>
        <dbReference type="HAMAP-Rule" id="MF_00321"/>
    </source>
</evidence>
<keyword id="KW-0131">Cell cycle</keyword>
<keyword id="KW-0132">Cell division</keyword>
<keyword id="KW-0342">GTP-binding</keyword>
<keyword id="KW-0460">Magnesium</keyword>
<keyword id="KW-0479">Metal-binding</keyword>
<keyword id="KW-0547">Nucleotide-binding</keyword>
<keyword id="KW-1185">Reference proteome</keyword>
<keyword id="KW-0717">Septation</keyword>
<comment type="function">
    <text evidence="1">Necessary for normal cell division and for the maintenance of normal septation.</text>
</comment>
<comment type="cofactor">
    <cofactor evidence="1">
        <name>Mg(2+)</name>
        <dbReference type="ChEBI" id="CHEBI:18420"/>
    </cofactor>
</comment>
<comment type="similarity">
    <text evidence="1">Belongs to the TRAFAC class TrmE-Era-EngA-EngB-Septin-like GTPase superfamily. EngB GTPase family.</text>
</comment>
<dbReference type="EMBL" id="BX908798">
    <property type="protein sequence ID" value="CAF22959.1"/>
    <property type="molecule type" value="Genomic_DNA"/>
</dbReference>
<dbReference type="RefSeq" id="WP_011174785.1">
    <property type="nucleotide sequence ID" value="NC_005861.2"/>
</dbReference>
<dbReference type="SMR" id="Q6MEP0"/>
<dbReference type="STRING" id="264201.pc0235"/>
<dbReference type="KEGG" id="pcu:PC_RS01140"/>
<dbReference type="eggNOG" id="COG0218">
    <property type="taxonomic scope" value="Bacteria"/>
</dbReference>
<dbReference type="HOGENOM" id="CLU_033732_3_0_0"/>
<dbReference type="OrthoDB" id="9804921at2"/>
<dbReference type="Proteomes" id="UP000000529">
    <property type="component" value="Chromosome"/>
</dbReference>
<dbReference type="GO" id="GO:0005829">
    <property type="term" value="C:cytosol"/>
    <property type="evidence" value="ECO:0007669"/>
    <property type="project" value="TreeGrafter"/>
</dbReference>
<dbReference type="GO" id="GO:0005525">
    <property type="term" value="F:GTP binding"/>
    <property type="evidence" value="ECO:0007669"/>
    <property type="project" value="UniProtKB-UniRule"/>
</dbReference>
<dbReference type="GO" id="GO:0046872">
    <property type="term" value="F:metal ion binding"/>
    <property type="evidence" value="ECO:0007669"/>
    <property type="project" value="UniProtKB-KW"/>
</dbReference>
<dbReference type="GO" id="GO:0000917">
    <property type="term" value="P:division septum assembly"/>
    <property type="evidence" value="ECO:0007669"/>
    <property type="project" value="UniProtKB-KW"/>
</dbReference>
<dbReference type="CDD" id="cd01876">
    <property type="entry name" value="YihA_EngB"/>
    <property type="match status" value="1"/>
</dbReference>
<dbReference type="Gene3D" id="3.40.50.300">
    <property type="entry name" value="P-loop containing nucleotide triphosphate hydrolases"/>
    <property type="match status" value="1"/>
</dbReference>
<dbReference type="HAMAP" id="MF_00321">
    <property type="entry name" value="GTPase_EngB"/>
    <property type="match status" value="1"/>
</dbReference>
<dbReference type="InterPro" id="IPR030393">
    <property type="entry name" value="G_ENGB_dom"/>
</dbReference>
<dbReference type="InterPro" id="IPR006073">
    <property type="entry name" value="GTP-bd"/>
</dbReference>
<dbReference type="InterPro" id="IPR019987">
    <property type="entry name" value="GTP-bd_ribosome_bio_YsxC"/>
</dbReference>
<dbReference type="InterPro" id="IPR027417">
    <property type="entry name" value="P-loop_NTPase"/>
</dbReference>
<dbReference type="NCBIfam" id="TIGR03598">
    <property type="entry name" value="GTPase_YsxC"/>
    <property type="match status" value="1"/>
</dbReference>
<dbReference type="PANTHER" id="PTHR11649:SF13">
    <property type="entry name" value="ENGB-TYPE G DOMAIN-CONTAINING PROTEIN"/>
    <property type="match status" value="1"/>
</dbReference>
<dbReference type="PANTHER" id="PTHR11649">
    <property type="entry name" value="MSS1/TRME-RELATED GTP-BINDING PROTEIN"/>
    <property type="match status" value="1"/>
</dbReference>
<dbReference type="Pfam" id="PF01926">
    <property type="entry name" value="MMR_HSR1"/>
    <property type="match status" value="1"/>
</dbReference>
<dbReference type="SUPFAM" id="SSF52540">
    <property type="entry name" value="P-loop containing nucleoside triphosphate hydrolases"/>
    <property type="match status" value="1"/>
</dbReference>
<dbReference type="PROSITE" id="PS51706">
    <property type="entry name" value="G_ENGB"/>
    <property type="match status" value="1"/>
</dbReference>
<accession>Q6MEP0</accession>
<proteinExistence type="inferred from homology"/>
<sequence>MKKAVQAKFIKTAILNKDYPIIRSPSGDILPEVAVVGRSNVGKSSLLNHLFEAKHLVKTSATPGKTQALNFFSLNDQIAFADLPGYGYAKVPPSVRKEWGPMVRSYLESRESLKLILFLLDIRRIPNEEDIQFLEWVLYHEKALILVLTKIDKVNQKELRLNTTKILDTLSLMNLHHLYYSVPKNRGRKELMIMIQDALNDEDKQE</sequence>
<feature type="chain" id="PRO_0000266917" description="Probable GTP-binding protein EngB">
    <location>
        <begin position="1"/>
        <end position="206"/>
    </location>
</feature>
<feature type="domain" description="EngB-type G" evidence="1">
    <location>
        <begin position="29"/>
        <end position="201"/>
    </location>
</feature>
<feature type="binding site" evidence="1">
    <location>
        <begin position="37"/>
        <end position="44"/>
    </location>
    <ligand>
        <name>GTP</name>
        <dbReference type="ChEBI" id="CHEBI:37565"/>
    </ligand>
</feature>
<feature type="binding site" evidence="1">
    <location>
        <position position="44"/>
    </location>
    <ligand>
        <name>Mg(2+)</name>
        <dbReference type="ChEBI" id="CHEBI:18420"/>
    </ligand>
</feature>
<feature type="binding site" evidence="1">
    <location>
        <begin position="64"/>
        <end position="68"/>
    </location>
    <ligand>
        <name>GTP</name>
        <dbReference type="ChEBI" id="CHEBI:37565"/>
    </ligand>
</feature>
<feature type="binding site" evidence="1">
    <location>
        <position position="66"/>
    </location>
    <ligand>
        <name>Mg(2+)</name>
        <dbReference type="ChEBI" id="CHEBI:18420"/>
    </ligand>
</feature>
<feature type="binding site" evidence="1">
    <location>
        <begin position="82"/>
        <end position="85"/>
    </location>
    <ligand>
        <name>GTP</name>
        <dbReference type="ChEBI" id="CHEBI:37565"/>
    </ligand>
</feature>
<feature type="binding site" evidence="1">
    <location>
        <begin position="149"/>
        <end position="152"/>
    </location>
    <ligand>
        <name>GTP</name>
        <dbReference type="ChEBI" id="CHEBI:37565"/>
    </ligand>
</feature>
<feature type="binding site" evidence="1">
    <location>
        <begin position="180"/>
        <end position="182"/>
    </location>
    <ligand>
        <name>GTP</name>
        <dbReference type="ChEBI" id="CHEBI:37565"/>
    </ligand>
</feature>
<name>ENGB_PARUW</name>
<reference key="1">
    <citation type="journal article" date="2004" name="Science">
        <title>Illuminating the evolutionary history of chlamydiae.</title>
        <authorList>
            <person name="Horn M."/>
            <person name="Collingro A."/>
            <person name="Schmitz-Esser S."/>
            <person name="Beier C.L."/>
            <person name="Purkhold U."/>
            <person name="Fartmann B."/>
            <person name="Brandt P."/>
            <person name="Nyakatura G.J."/>
            <person name="Droege M."/>
            <person name="Frishman D."/>
            <person name="Rattei T."/>
            <person name="Mewes H.-W."/>
            <person name="Wagner M."/>
        </authorList>
    </citation>
    <scope>NUCLEOTIDE SEQUENCE [LARGE SCALE GENOMIC DNA]</scope>
    <source>
        <strain>UWE25</strain>
    </source>
</reference>
<gene>
    <name evidence="1" type="primary">engB</name>
    <name type="ordered locus">pc0235</name>
</gene>
<protein>
    <recommendedName>
        <fullName evidence="1">Probable GTP-binding protein EngB</fullName>
    </recommendedName>
</protein>
<organism>
    <name type="scientific">Protochlamydia amoebophila (strain UWE25)</name>
    <dbReference type="NCBI Taxonomy" id="264201"/>
    <lineage>
        <taxon>Bacteria</taxon>
        <taxon>Pseudomonadati</taxon>
        <taxon>Chlamydiota</taxon>
        <taxon>Chlamydiia</taxon>
        <taxon>Parachlamydiales</taxon>
        <taxon>Parachlamydiaceae</taxon>
        <taxon>Candidatus Protochlamydia</taxon>
    </lineage>
</organism>